<name>MRB1_YEAST</name>
<comment type="function">
    <text evidence="4 5 6">RNA-binding protein that acts as a post-transcriptional regulator of phosphate metabolism by binding to the 3'-UTR region of PHO4 mRNA, decreasing its stability (PubMed:24206186). Acts by recognizing and binding N6-methyladenosine (m6A)-containing RNAs, a modification present at internal sites of mRNAs and some non-coding RNAs (PubMed:24269006, PubMed:26318451).</text>
</comment>
<comment type="developmental stage">
    <text evidence="5">Expressed in a meiosis-specific manner.</text>
</comment>
<comment type="disruption phenotype">
    <text evidence="5">Defects in meiotic progression.</text>
</comment>
<evidence type="ECO:0000250" key="1">
    <source>
        <dbReference type="UniProtKB" id="Q9BYJ9"/>
    </source>
</evidence>
<evidence type="ECO:0000250" key="2">
    <source>
        <dbReference type="UniProtKB" id="Q9Y5A9"/>
    </source>
</evidence>
<evidence type="ECO:0000255" key="3">
    <source>
        <dbReference type="PROSITE-ProRule" id="PRU00225"/>
    </source>
</evidence>
<evidence type="ECO:0000269" key="4">
    <source>
    </source>
</evidence>
<evidence type="ECO:0000269" key="5">
    <source>
    </source>
</evidence>
<evidence type="ECO:0000269" key="6">
    <source>
    </source>
</evidence>
<evidence type="ECO:0000303" key="7">
    <source>
    </source>
</evidence>
<evidence type="ECO:0007744" key="8">
    <source>
        <dbReference type="PDB" id="4RCM"/>
    </source>
</evidence>
<evidence type="ECO:0007829" key="9">
    <source>
        <dbReference type="PDB" id="4RCM"/>
    </source>
</evidence>
<reference key="1">
    <citation type="journal article" date="1997" name="Nature">
        <title>The nucleotide sequence of Saccharomyces cerevisiae chromosome IV.</title>
        <authorList>
            <person name="Jacq C."/>
            <person name="Alt-Moerbe J."/>
            <person name="Andre B."/>
            <person name="Arnold W."/>
            <person name="Bahr A."/>
            <person name="Ballesta J.P.G."/>
            <person name="Bargues M."/>
            <person name="Baron L."/>
            <person name="Becker A."/>
            <person name="Biteau N."/>
            <person name="Bloecker H."/>
            <person name="Blugeon C."/>
            <person name="Boskovic J."/>
            <person name="Brandt P."/>
            <person name="Brueckner M."/>
            <person name="Buitrago M.J."/>
            <person name="Coster F."/>
            <person name="Delaveau T."/>
            <person name="del Rey F."/>
            <person name="Dujon B."/>
            <person name="Eide L.G."/>
            <person name="Garcia-Cantalejo J.M."/>
            <person name="Goffeau A."/>
            <person name="Gomez-Peris A."/>
            <person name="Granotier C."/>
            <person name="Hanemann V."/>
            <person name="Hankeln T."/>
            <person name="Hoheisel J.D."/>
            <person name="Jaeger W."/>
            <person name="Jimenez A."/>
            <person name="Jonniaux J.-L."/>
            <person name="Kraemer C."/>
            <person name="Kuester H."/>
            <person name="Laamanen P."/>
            <person name="Legros Y."/>
            <person name="Louis E.J."/>
            <person name="Moeller-Rieker S."/>
            <person name="Monnet A."/>
            <person name="Moro M."/>
            <person name="Mueller-Auer S."/>
            <person name="Nussbaumer B."/>
            <person name="Paricio N."/>
            <person name="Paulin L."/>
            <person name="Perea J."/>
            <person name="Perez-Alonso M."/>
            <person name="Perez-Ortin J.E."/>
            <person name="Pohl T.M."/>
            <person name="Prydz H."/>
            <person name="Purnelle B."/>
            <person name="Rasmussen S.W."/>
            <person name="Remacha M.A."/>
            <person name="Revuelta J.L."/>
            <person name="Rieger M."/>
            <person name="Salom D."/>
            <person name="Saluz H.P."/>
            <person name="Saiz J.E."/>
            <person name="Saren A.-M."/>
            <person name="Schaefer M."/>
            <person name="Scharfe M."/>
            <person name="Schmidt E.R."/>
            <person name="Schneider C."/>
            <person name="Scholler P."/>
            <person name="Schwarz S."/>
            <person name="Soler-Mira A."/>
            <person name="Urrestarazu L.A."/>
            <person name="Verhasselt P."/>
            <person name="Vissers S."/>
            <person name="Voet M."/>
            <person name="Volckaert G."/>
            <person name="Wagner G."/>
            <person name="Wambutt R."/>
            <person name="Wedler E."/>
            <person name="Wedler H."/>
            <person name="Woelfl S."/>
            <person name="Harris D.E."/>
            <person name="Bowman S."/>
            <person name="Brown D."/>
            <person name="Churcher C.M."/>
            <person name="Connor R."/>
            <person name="Dedman K."/>
            <person name="Gentles S."/>
            <person name="Hamlin N."/>
            <person name="Hunt S."/>
            <person name="Jones L."/>
            <person name="McDonald S."/>
            <person name="Murphy L.D."/>
            <person name="Niblett D."/>
            <person name="Odell C."/>
            <person name="Oliver K."/>
            <person name="Rajandream M.A."/>
            <person name="Richards C."/>
            <person name="Shore L."/>
            <person name="Walsh S.V."/>
            <person name="Barrell B.G."/>
            <person name="Dietrich F.S."/>
            <person name="Mulligan J.T."/>
            <person name="Allen E."/>
            <person name="Araujo R."/>
            <person name="Aviles E."/>
            <person name="Berno A."/>
            <person name="Carpenter J."/>
            <person name="Chen E."/>
            <person name="Cherry J.M."/>
            <person name="Chung E."/>
            <person name="Duncan M."/>
            <person name="Hunicke-Smith S."/>
            <person name="Hyman R.W."/>
            <person name="Komp C."/>
            <person name="Lashkari D."/>
            <person name="Lew H."/>
            <person name="Lin D."/>
            <person name="Mosedale D."/>
            <person name="Nakahara K."/>
            <person name="Namath A."/>
            <person name="Oefner P."/>
            <person name="Oh C."/>
            <person name="Petel F.X."/>
            <person name="Roberts D."/>
            <person name="Schramm S."/>
            <person name="Schroeder M."/>
            <person name="Shogren T."/>
            <person name="Shroff N."/>
            <person name="Winant A."/>
            <person name="Yelton M.A."/>
            <person name="Botstein D."/>
            <person name="Davis R.W."/>
            <person name="Johnston M."/>
            <person name="Andrews S."/>
            <person name="Brinkman R."/>
            <person name="Cooper J."/>
            <person name="Ding H."/>
            <person name="Du Z."/>
            <person name="Favello A."/>
            <person name="Fulton L."/>
            <person name="Gattung S."/>
            <person name="Greco T."/>
            <person name="Hallsworth K."/>
            <person name="Hawkins J."/>
            <person name="Hillier L.W."/>
            <person name="Jier M."/>
            <person name="Johnson D."/>
            <person name="Johnston L."/>
            <person name="Kirsten J."/>
            <person name="Kucaba T."/>
            <person name="Langston Y."/>
            <person name="Latreille P."/>
            <person name="Le T."/>
            <person name="Mardis E."/>
            <person name="Menezes S."/>
            <person name="Miller N."/>
            <person name="Nhan M."/>
            <person name="Pauley A."/>
            <person name="Peluso D."/>
            <person name="Rifkin L."/>
            <person name="Riles L."/>
            <person name="Taich A."/>
            <person name="Trevaskis E."/>
            <person name="Vignati D."/>
            <person name="Wilcox L."/>
            <person name="Wohldman P."/>
            <person name="Vaudin M."/>
            <person name="Wilson R."/>
            <person name="Waterston R."/>
            <person name="Albermann K."/>
            <person name="Hani J."/>
            <person name="Heumann K."/>
            <person name="Kleine K."/>
            <person name="Mewes H.-W."/>
            <person name="Zollner A."/>
            <person name="Zaccaria P."/>
        </authorList>
    </citation>
    <scope>NUCLEOTIDE SEQUENCE [LARGE SCALE GENOMIC DNA]</scope>
    <source>
        <strain>ATCC 204508 / S288c</strain>
    </source>
</reference>
<reference key="2">
    <citation type="journal article" date="2014" name="G3 (Bethesda)">
        <title>The reference genome sequence of Saccharomyces cerevisiae: Then and now.</title>
        <authorList>
            <person name="Engel S.R."/>
            <person name="Dietrich F.S."/>
            <person name="Fisk D.G."/>
            <person name="Binkley G."/>
            <person name="Balakrishnan R."/>
            <person name="Costanzo M.C."/>
            <person name="Dwight S.S."/>
            <person name="Hitz B.C."/>
            <person name="Karra K."/>
            <person name="Nash R.S."/>
            <person name="Weng S."/>
            <person name="Wong E.D."/>
            <person name="Lloyd P."/>
            <person name="Skrzypek M.S."/>
            <person name="Miyasato S.R."/>
            <person name="Simison M."/>
            <person name="Cherry J.M."/>
        </authorList>
    </citation>
    <scope>GENOME REANNOTATION</scope>
    <source>
        <strain>ATCC 204508 / S288c</strain>
    </source>
</reference>
<reference key="3">
    <citation type="journal article" date="2014" name="Biochem. J.">
        <title>A novel protein, Pho92, has a conserved YTH domain and regulates phosphate metabolism by decreasing the mRNA stability of PHO4 in Saccharomyces cerevisiae.</title>
        <authorList>
            <person name="Kang H.J."/>
            <person name="Jeong S.J."/>
            <person name="Kim K.N."/>
            <person name="Baek I.J."/>
            <person name="Chang M."/>
            <person name="Kang C.M."/>
            <person name="Park Y.S."/>
            <person name="Yun C.W."/>
        </authorList>
    </citation>
    <scope>FUNCTION</scope>
    <scope>RNA-BINDING</scope>
</reference>
<reference key="4">
    <citation type="journal article" date="2013" name="Cell">
        <title>High-resolution mapping reveals a conserved, widespread, dynamic mRNA methylation program in yeast meiosis.</title>
        <authorList>
            <person name="Schwartz S."/>
            <person name="Agarwala S.D."/>
            <person name="Mumbach M.R."/>
            <person name="Jovanovic M."/>
            <person name="Mertins P."/>
            <person name="Shishkin A."/>
            <person name="Tabach Y."/>
            <person name="Mikkelsen T.S."/>
            <person name="Satija R."/>
            <person name="Ruvkun G."/>
            <person name="Carr S.A."/>
            <person name="Lander E.S."/>
            <person name="Fink G.R."/>
            <person name="Regev A."/>
        </authorList>
    </citation>
    <scope>FUNCTION</scope>
    <scope>RNA-BINDING</scope>
    <scope>DEVELOPMENTAL STAGE</scope>
    <scope>DISRUPTION PHENOTYPE</scope>
</reference>
<reference evidence="8" key="5">
    <citation type="journal article" date="2015" name="J. Biol. Chem.">
        <title>structural basis for the discriminative recognition of N6-methyladenosine RNA by the human YT521-B homology domain family of proteins.</title>
        <authorList>
            <person name="Xu C."/>
            <person name="Liu K."/>
            <person name="Ahmed H."/>
            <person name="Loppnau P."/>
            <person name="Schapira M."/>
            <person name="Min J."/>
        </authorList>
    </citation>
    <scope>X-RAY CRYSTALLOGRAPHY (1.80 ANGSTROMS) OF 141-306 IN COMPLEX WITH N6-METHYLADENOSINE (M6A)-CONTAINING RNA</scope>
    <scope>FUNCTION</scope>
    <scope>RNA-BINDING</scope>
    <scope>MUTAGENESIS OF TRP-177; TRP-231 AND ARG-273</scope>
</reference>
<accession>Q06390</accession>
<accession>D6VT05</accession>
<organism>
    <name type="scientific">Saccharomyces cerevisiae (strain ATCC 204508 / S288c)</name>
    <name type="common">Baker's yeast</name>
    <dbReference type="NCBI Taxonomy" id="559292"/>
    <lineage>
        <taxon>Eukaryota</taxon>
        <taxon>Fungi</taxon>
        <taxon>Dikarya</taxon>
        <taxon>Ascomycota</taxon>
        <taxon>Saccharomycotina</taxon>
        <taxon>Saccharomycetes</taxon>
        <taxon>Saccharomycetales</taxon>
        <taxon>Saccharomycetaceae</taxon>
        <taxon>Saccharomyces</taxon>
    </lineage>
</organism>
<protein>
    <recommendedName>
        <fullName>Methylated RNA-binding protein 1</fullName>
    </recommendedName>
    <alternativeName>
        <fullName evidence="7">PHOsphate metabolism protein 92</fullName>
    </alternativeName>
    <alternativeName>
        <fullName>YTH domain-containing protein PHO92</fullName>
    </alternativeName>
</protein>
<sequence length="306" mass="36052">MNQIWSTGPPNFYFNSEWKENKRNDRTIEDSLRELDGLIHSLERTHIEVQTNPKLKNDVTALNDINKKENKEEITHENYTHQINSIPLTSSNLNRHFSFSRDYNQSDNSNNNYYREYLSKPRYLQQSTKEQTFNEINKRKSAAIIPPWLNIPENSRFFVIKSSSLKHVKRSFYNGIWSSTHFGNKRLSEAYKKLNSGAKVFLFFSINTSGRFCGVAEMVSDLKMDLDTSIWEDEQKYGKAFKVRWVIVRDINNRSLKRFLIPSNEMKPITHSRDTQEIPYSIGISIINLFKTQDSDIFSFLDETYE</sequence>
<keyword id="KW-0002">3D-structure</keyword>
<keyword id="KW-1185">Reference proteome</keyword>
<keyword id="KW-0694">RNA-binding</keyword>
<feature type="chain" id="PRO_0000253821" description="Methylated RNA-binding protein 1">
    <location>
        <begin position="1"/>
        <end position="306"/>
    </location>
</feature>
<feature type="domain" description="YTH" evidence="3">
    <location>
        <begin position="155"/>
        <end position="290"/>
    </location>
</feature>
<feature type="binding site" evidence="6 8">
    <location>
        <begin position="161"/>
        <end position="163"/>
    </location>
    <ligand>
        <name>RNA</name>
        <dbReference type="ChEBI" id="CHEBI:33697"/>
    </ligand>
    <ligandPart>
        <name>N(6)-methyladenosine 5'-phosphate residue</name>
        <dbReference type="ChEBI" id="CHEBI:74449"/>
    </ligandPart>
</feature>
<feature type="binding site" evidence="2">
    <location>
        <position position="207"/>
    </location>
    <ligand>
        <name>RNA</name>
        <dbReference type="ChEBI" id="CHEBI:33697"/>
    </ligand>
    <ligandPart>
        <name>N(6)-methyladenosine 5'-phosphate residue</name>
        <dbReference type="ChEBI" id="CHEBI:74449"/>
    </ligandPart>
</feature>
<feature type="binding site" evidence="1">
    <location>
        <position position="231"/>
    </location>
    <ligand>
        <name>RNA</name>
        <dbReference type="ChEBI" id="CHEBI:33697"/>
    </ligand>
    <ligandPart>
        <name>N(6)-methyladenosine 5'-phosphate residue</name>
        <dbReference type="ChEBI" id="CHEBI:74449"/>
    </ligandPart>
</feature>
<feature type="mutagenesis site" description="Abolishes binding to N6-methyladenosine (m6A)-containing RNAs." evidence="6">
    <original>W</original>
    <variation>A</variation>
    <location>
        <position position="177"/>
    </location>
</feature>
<feature type="mutagenesis site" description="Abolishes binding to N6-methyladenosine (m6A)-containing RNAs." evidence="6">
    <original>W</original>
    <variation>A</variation>
    <location>
        <position position="231"/>
    </location>
</feature>
<feature type="mutagenesis site" description="Abolishes binding to N6-methyladenosine (m6A)-containing RNAs." evidence="6">
    <original>R</original>
    <variation>A</variation>
    <location>
        <position position="273"/>
    </location>
</feature>
<feature type="strand" evidence="9">
    <location>
        <begin position="156"/>
        <end position="163"/>
    </location>
</feature>
<feature type="helix" evidence="9">
    <location>
        <begin position="165"/>
        <end position="174"/>
    </location>
</feature>
<feature type="helix" evidence="9">
    <location>
        <begin position="181"/>
        <end position="192"/>
    </location>
</feature>
<feature type="strand" evidence="9">
    <location>
        <begin position="200"/>
        <end position="206"/>
    </location>
</feature>
<feature type="turn" evidence="9">
    <location>
        <begin position="207"/>
        <end position="210"/>
    </location>
</feature>
<feature type="strand" evidence="9">
    <location>
        <begin position="211"/>
        <end position="218"/>
    </location>
</feature>
<feature type="strand" evidence="9">
    <location>
        <begin position="223"/>
        <end position="226"/>
    </location>
</feature>
<feature type="helix" evidence="9">
    <location>
        <begin position="228"/>
        <end position="230"/>
    </location>
</feature>
<feature type="helix" evidence="9">
    <location>
        <begin position="234"/>
        <end position="236"/>
    </location>
</feature>
<feature type="strand" evidence="9">
    <location>
        <begin position="240"/>
        <end position="251"/>
    </location>
</feature>
<feature type="helix" evidence="9">
    <location>
        <begin position="253"/>
        <end position="256"/>
    </location>
</feature>
<feature type="turn" evidence="9">
    <location>
        <begin position="262"/>
        <end position="266"/>
    </location>
</feature>
<feature type="helix" evidence="9">
    <location>
        <begin position="269"/>
        <end position="271"/>
    </location>
</feature>
<feature type="helix" evidence="9">
    <location>
        <begin position="280"/>
        <end position="290"/>
    </location>
</feature>
<gene>
    <name evidence="7" type="primary">PHO92</name>
    <name type="synonym">MRB1</name>
    <name type="ordered locus">YDR374C</name>
</gene>
<proteinExistence type="evidence at protein level"/>
<dbReference type="EMBL" id="U28373">
    <property type="protein sequence ID" value="AAB64810.1"/>
    <property type="molecule type" value="Genomic_DNA"/>
</dbReference>
<dbReference type="EMBL" id="BK006938">
    <property type="protein sequence ID" value="DAA12215.1"/>
    <property type="molecule type" value="Genomic_DNA"/>
</dbReference>
<dbReference type="PIR" id="S61169">
    <property type="entry name" value="S61169"/>
</dbReference>
<dbReference type="RefSeq" id="NP_010662.3">
    <property type="nucleotide sequence ID" value="NM_001180682.3"/>
</dbReference>
<dbReference type="PDB" id="4RCM">
    <property type="method" value="X-ray"/>
    <property type="resolution" value="1.80 A"/>
    <property type="chains" value="A/B=141-306"/>
</dbReference>
<dbReference type="PDBsum" id="4RCM"/>
<dbReference type="SMR" id="Q06390"/>
<dbReference type="BioGRID" id="32433">
    <property type="interactions" value="304"/>
</dbReference>
<dbReference type="DIP" id="DIP-5677N"/>
<dbReference type="FunCoup" id="Q06390">
    <property type="interactions" value="34"/>
</dbReference>
<dbReference type="IntAct" id="Q06390">
    <property type="interactions" value="3"/>
</dbReference>
<dbReference type="MINT" id="Q06390"/>
<dbReference type="STRING" id="4932.YDR374C"/>
<dbReference type="PaxDb" id="4932-YDR374C"/>
<dbReference type="PeptideAtlas" id="Q06390"/>
<dbReference type="EnsemblFungi" id="YDR374C_mRNA">
    <property type="protein sequence ID" value="YDR374C"/>
    <property type="gene ID" value="YDR374C"/>
</dbReference>
<dbReference type="GeneID" id="851980"/>
<dbReference type="KEGG" id="sce:YDR374C"/>
<dbReference type="AGR" id="SGD:S000002782"/>
<dbReference type="SGD" id="S000002782">
    <property type="gene designation" value="PHO92"/>
</dbReference>
<dbReference type="VEuPathDB" id="FungiDB:YDR374C"/>
<dbReference type="eggNOG" id="KOG1901">
    <property type="taxonomic scope" value="Eukaryota"/>
</dbReference>
<dbReference type="GeneTree" id="ENSGT00940000170935"/>
<dbReference type="HOGENOM" id="CLU_064798_1_0_1"/>
<dbReference type="InParanoid" id="Q06390"/>
<dbReference type="OMA" id="THIEVQT"/>
<dbReference type="OrthoDB" id="306690at2759"/>
<dbReference type="BioCyc" id="YEAST:G3O-29924-MONOMER"/>
<dbReference type="BioGRID-ORCS" id="851980">
    <property type="hits" value="0 hits in 10 CRISPR screens"/>
</dbReference>
<dbReference type="EvolutionaryTrace" id="Q06390"/>
<dbReference type="PRO" id="PR:Q06390"/>
<dbReference type="Proteomes" id="UP000002311">
    <property type="component" value="Chromosome IV"/>
</dbReference>
<dbReference type="RNAct" id="Q06390">
    <property type="molecule type" value="protein"/>
</dbReference>
<dbReference type="GO" id="GO:0005737">
    <property type="term" value="C:cytoplasm"/>
    <property type="evidence" value="ECO:0000314"/>
    <property type="project" value="SGD"/>
</dbReference>
<dbReference type="GO" id="GO:0003730">
    <property type="term" value="F:mRNA 3'-UTR binding"/>
    <property type="evidence" value="ECO:0000314"/>
    <property type="project" value="SGD"/>
</dbReference>
<dbReference type="GO" id="GO:0003729">
    <property type="term" value="F:mRNA binding"/>
    <property type="evidence" value="ECO:0000318"/>
    <property type="project" value="GO_Central"/>
</dbReference>
<dbReference type="GO" id="GO:1990247">
    <property type="term" value="F:N6-methyladenosine-containing RNA reader activity"/>
    <property type="evidence" value="ECO:0000314"/>
    <property type="project" value="UniProtKB"/>
</dbReference>
<dbReference type="GO" id="GO:0061157">
    <property type="term" value="P:mRNA destabilization"/>
    <property type="evidence" value="ECO:0000318"/>
    <property type="project" value="GO_Central"/>
</dbReference>
<dbReference type="GO" id="GO:0043488">
    <property type="term" value="P:regulation of mRNA stability"/>
    <property type="evidence" value="ECO:0000315"/>
    <property type="project" value="SGD"/>
</dbReference>
<dbReference type="GO" id="GO:0019220">
    <property type="term" value="P:regulation of phosphate metabolic process"/>
    <property type="evidence" value="ECO:0000315"/>
    <property type="project" value="SGD"/>
</dbReference>
<dbReference type="CDD" id="cd21134">
    <property type="entry name" value="YTH"/>
    <property type="match status" value="1"/>
</dbReference>
<dbReference type="FunFam" id="3.10.590.10:FF:000007">
    <property type="entry name" value="YDR374C-like protein"/>
    <property type="match status" value="1"/>
</dbReference>
<dbReference type="Gene3D" id="3.10.590.10">
    <property type="entry name" value="ph1033 like domains"/>
    <property type="match status" value="1"/>
</dbReference>
<dbReference type="InterPro" id="IPR007275">
    <property type="entry name" value="YTH_domain"/>
</dbReference>
<dbReference type="InterPro" id="IPR045168">
    <property type="entry name" value="YTH_prot"/>
</dbReference>
<dbReference type="PANTHER" id="PTHR12357:SF89">
    <property type="entry name" value="YTH DOMAIN-CONTAINING FAMILY PROTEIN"/>
    <property type="match status" value="1"/>
</dbReference>
<dbReference type="PANTHER" id="PTHR12357">
    <property type="entry name" value="YTH YT521-B HOMOLOGY DOMAIN-CONTAINING"/>
    <property type="match status" value="1"/>
</dbReference>
<dbReference type="Pfam" id="PF04146">
    <property type="entry name" value="YTH"/>
    <property type="match status" value="1"/>
</dbReference>
<dbReference type="PROSITE" id="PS50882">
    <property type="entry name" value="YTH"/>
    <property type="match status" value="1"/>
</dbReference>